<comment type="function">
    <text evidence="2">Catalyzes the conversion of (2E,6E)-farnesyl diphosphate (FPP) to yield the bicyclic sesquiterpene guaia-6,10(14)-diene via a 1,10-cyclization, which requires the abstraction of the pyrophosphate from FPP to yield the (E,E)-germacradienyl cation. The only accepted substrate is farnesyl diphosphate (FPP).</text>
</comment>
<comment type="catalytic activity">
    <reaction evidence="2">
        <text>(2E,6E)-farnesyl diphosphate = (1R,4R,5S)-(-)-guaia-6,10(14)-diene + diphosphate</text>
        <dbReference type="Rhea" id="RHEA:53668"/>
        <dbReference type="ChEBI" id="CHEBI:33019"/>
        <dbReference type="ChEBI" id="CHEBI:137563"/>
        <dbReference type="ChEBI" id="CHEBI:175763"/>
        <dbReference type="EC" id="4.2.3.165"/>
    </reaction>
</comment>
<comment type="cofactor">
    <cofactor evidence="1">
        <name>Mg(2+)</name>
        <dbReference type="ChEBI" id="CHEBI:18420"/>
    </cofactor>
    <text evidence="1">Binds 3 Mg(2+) ions per subunit.</text>
</comment>
<comment type="pathway">
    <text evidence="4">Secondary metabolite biosynthesis; terpenoid biosynthesis.</text>
</comment>
<comment type="domain">
    <text evidence="5">The Asp-Asp-Xaa-Xaa-Asp (DDXXD) motif is important for the catalytic activity, presumably through binding to Mg(2+).</text>
</comment>
<comment type="similarity">
    <text evidence="4">Belongs to the terpene synthase family.</text>
</comment>
<evidence type="ECO:0000250" key="1">
    <source>
        <dbReference type="UniProtKB" id="B5HDJ6"/>
    </source>
</evidence>
<evidence type="ECO:0000269" key="2">
    <source>
    </source>
</evidence>
<evidence type="ECO:0000303" key="3">
    <source>
    </source>
</evidence>
<evidence type="ECO:0000305" key="4"/>
<evidence type="ECO:0000305" key="5">
    <source>
    </source>
</evidence>
<evidence type="ECO:0000312" key="6">
    <source>
        <dbReference type="EMBL" id="CVL03997.1"/>
    </source>
</evidence>
<proteinExistence type="evidence at protein level"/>
<gene>
    <name evidence="6" type="ORF">FMAN_14887</name>
</gene>
<keyword id="KW-0456">Lyase</keyword>
<keyword id="KW-0460">Magnesium</keyword>
<keyword id="KW-0479">Metal-binding</keyword>
<dbReference type="EC" id="4.2.3.165" evidence="2"/>
<dbReference type="EMBL" id="FCQH01000014">
    <property type="protein sequence ID" value="CVL03997.1"/>
    <property type="molecule type" value="Genomic_DNA"/>
</dbReference>
<dbReference type="RefSeq" id="XP_041688448.1">
    <property type="nucleotide sequence ID" value="XM_041822804.1"/>
</dbReference>
<dbReference type="SMR" id="A0A1L7U8F2"/>
<dbReference type="GeneID" id="65094130"/>
<dbReference type="VEuPathDB" id="FungiDB:FMAN_14887"/>
<dbReference type="UniPathway" id="UPA00213"/>
<dbReference type="Proteomes" id="UP000184255">
    <property type="component" value="Unassembled WGS sequence"/>
</dbReference>
<dbReference type="GO" id="GO:0046872">
    <property type="term" value="F:metal ion binding"/>
    <property type="evidence" value="ECO:0007669"/>
    <property type="project" value="UniProtKB-KW"/>
</dbReference>
<dbReference type="GO" id="GO:0010333">
    <property type="term" value="F:terpene synthase activity"/>
    <property type="evidence" value="ECO:0007669"/>
    <property type="project" value="InterPro"/>
</dbReference>
<dbReference type="GO" id="GO:0016114">
    <property type="term" value="P:terpenoid biosynthetic process"/>
    <property type="evidence" value="ECO:0007669"/>
    <property type="project" value="UniProtKB-UniPathway"/>
</dbReference>
<dbReference type="Gene3D" id="1.10.600.10">
    <property type="entry name" value="Farnesyl Diphosphate Synthase"/>
    <property type="match status" value="1"/>
</dbReference>
<dbReference type="InterPro" id="IPR008949">
    <property type="entry name" value="Isoprenoid_synthase_dom_sf"/>
</dbReference>
<dbReference type="InterPro" id="IPR034686">
    <property type="entry name" value="Terpene_cyclase-like_2"/>
</dbReference>
<dbReference type="PANTHER" id="PTHR35201:SF4">
    <property type="entry name" value="BETA-PINACENE SYNTHASE-RELATED"/>
    <property type="match status" value="1"/>
</dbReference>
<dbReference type="PANTHER" id="PTHR35201">
    <property type="entry name" value="TERPENE SYNTHASE"/>
    <property type="match status" value="1"/>
</dbReference>
<dbReference type="Pfam" id="PF19086">
    <property type="entry name" value="Terpene_syn_C_2"/>
    <property type="match status" value="1"/>
</dbReference>
<dbReference type="SFLD" id="SFLDS00005">
    <property type="entry name" value="Isoprenoid_Synthase_Type_I"/>
    <property type="match status" value="1"/>
</dbReference>
<dbReference type="SFLD" id="SFLDG01020">
    <property type="entry name" value="Terpene_Cyclase_Like_2"/>
    <property type="match status" value="1"/>
</dbReference>
<dbReference type="SUPFAM" id="SSF48576">
    <property type="entry name" value="Terpenoid synthases"/>
    <property type="match status" value="1"/>
</dbReference>
<organism>
    <name type="scientific">Fusarium mangiferae</name>
    <name type="common">Mango malformation disease fungus</name>
    <dbReference type="NCBI Taxonomy" id="192010"/>
    <lineage>
        <taxon>Eukaryota</taxon>
        <taxon>Fungi</taxon>
        <taxon>Dikarya</taxon>
        <taxon>Ascomycota</taxon>
        <taxon>Pezizomycotina</taxon>
        <taxon>Sordariomycetes</taxon>
        <taxon>Hypocreomycetidae</taxon>
        <taxon>Hypocreales</taxon>
        <taxon>Nectriaceae</taxon>
        <taxon>Fusarium</taxon>
        <taxon>Fusarium fujikuroi species complex</taxon>
    </lineage>
</organism>
<feature type="chain" id="PRO_0000443320" description="(1R,4R,5S)-(-)-guaia-6,10(14)-diene synthase">
    <location>
        <begin position="1"/>
        <end position="401"/>
    </location>
</feature>
<feature type="short sequence motif" description="DDXXD motif" evidence="5">
    <location>
        <begin position="134"/>
        <end position="138"/>
    </location>
</feature>
<feature type="binding site" evidence="1">
    <location>
        <position position="134"/>
    </location>
    <ligand>
        <name>Mg(2+)</name>
        <dbReference type="ChEBI" id="CHEBI:18420"/>
        <label>1</label>
    </ligand>
</feature>
<feature type="binding site" evidence="1">
    <location>
        <position position="139"/>
    </location>
    <ligand>
        <name>Mg(2+)</name>
        <dbReference type="ChEBI" id="CHEBI:18420"/>
        <label>1</label>
    </ligand>
</feature>
<feature type="binding site" evidence="1">
    <location>
        <position position="139"/>
    </location>
    <ligand>
        <name>Mg(2+)</name>
        <dbReference type="ChEBI" id="CHEBI:18420"/>
        <label>2</label>
    </ligand>
</feature>
<feature type="binding site" evidence="1">
    <location>
        <position position="242"/>
    </location>
    <ligand>
        <name>substrate</name>
    </ligand>
</feature>
<feature type="binding site" evidence="1">
    <location>
        <position position="288"/>
    </location>
    <ligand>
        <name>Mg(2+)</name>
        <dbReference type="ChEBI" id="CHEBI:18420"/>
        <label>3</label>
    </ligand>
</feature>
<feature type="binding site" evidence="1">
    <location>
        <position position="292"/>
    </location>
    <ligand>
        <name>Mg(2+)</name>
        <dbReference type="ChEBI" id="CHEBI:18420"/>
        <label>3</label>
    </ligand>
</feature>
<feature type="binding site" evidence="1">
    <location>
        <position position="295"/>
    </location>
    <ligand>
        <name>substrate</name>
    </ligand>
</feature>
<feature type="binding site" evidence="1">
    <location>
        <position position="296"/>
    </location>
    <ligand>
        <name>Mg(2+)</name>
        <dbReference type="ChEBI" id="CHEBI:18420"/>
        <label>3</label>
    </ligand>
</feature>
<feature type="binding site" evidence="1">
    <location>
        <begin position="375"/>
        <end position="376"/>
    </location>
    <ligand>
        <name>substrate</name>
    </ligand>
</feature>
<accession>A0A1L7U8F2</accession>
<protein>
    <recommendedName>
        <fullName evidence="3">(1R,4R,5S)-(-)-guaia-6,10(14)-diene synthase</fullName>
        <ecNumber evidence="2">4.2.3.165</ecNumber>
    </recommendedName>
    <alternativeName>
        <fullName evidence="3">Sesquiterpene cyclase</fullName>
    </alternativeName>
    <alternativeName>
        <fullName evidence="3">Terpene synthase</fullName>
    </alternativeName>
    <alternativeName>
        <fullName evidence="3">Type I terpene cyclase</fullName>
    </alternativeName>
</protein>
<reference key="1">
    <citation type="journal article" date="2016" name="Genome Biol. Evol.">
        <title>Comparative 'omics' of the Fusarium fujikuroi species complex highlights differences in genetic potential and metabolite synthesis.</title>
        <authorList>
            <person name="Niehaus E.-M."/>
            <person name="Muensterkoetter M."/>
            <person name="Proctor R.H."/>
            <person name="Brown D.W."/>
            <person name="Sharon A."/>
            <person name="Idan Y."/>
            <person name="Oren-Young L."/>
            <person name="Sieber C.M."/>
            <person name="Novak O."/>
            <person name="Pencik A."/>
            <person name="Tarkowska D."/>
            <person name="Hromadova K."/>
            <person name="Freeman S."/>
            <person name="Maymon M."/>
            <person name="Elazar M."/>
            <person name="Youssef S.A."/>
            <person name="El-Shabrawy E.S.M."/>
            <person name="Shalaby A.B.A."/>
            <person name="Houterman P."/>
            <person name="Brock N.L."/>
            <person name="Burkhardt I."/>
            <person name="Tsavkelova E.A."/>
            <person name="Dickschat J.S."/>
            <person name="Galuszka P."/>
            <person name="Gueldener U."/>
            <person name="Tudzynski B."/>
        </authorList>
    </citation>
    <scope>NUCLEOTIDE SEQUENCE [LARGE SCALE GENOMIC DNA]</scope>
    <source>
        <strain>MRC7560</strain>
    </source>
</reference>
<reference key="2">
    <citation type="journal article" date="2016" name="Angew. Chem. Int. Ed.">
        <title>Mechanistic characterisation of two sesquiterpene cyclases from the plant pathogenic fungus Fusarium fujikuroi.</title>
        <authorList>
            <person name="Burkhardt I."/>
            <person name="Siemon T."/>
            <person name="Henrot M."/>
            <person name="Studt L."/>
            <person name="Roesler S."/>
            <person name="Tudzynski B."/>
            <person name="Christmann M."/>
            <person name="Dickschat J.S."/>
        </authorList>
    </citation>
    <scope>FUNCTION</scope>
    <scope>CATALYTIC ACTIVITY</scope>
    <scope>SUBSTRATE SPECIFICITY</scope>
    <scope>DOMAIN</scope>
    <scope>REACTION MECHANISM</scope>
</reference>
<name>GUDIS_FUSMA</name>
<sequence length="401" mass="45843">MVKFDSGSESEMTNGDEVHINTKHEVKSRMANGNGVHNVPDHDQFQDRAEMEVLILPDLFSSLMSVPARENPHYASVKADADEWISSVINADAKWASRNKRVDFTYLASIWAPDCSAFALRTSADWNSWAFLFDDQFDEGHLSNDLDGAINEIARTREIMEGTAPRYTADSEHPIRYVFQTLCDRVKQSPEGFYAGKPSSDRFYRRWMWAHELYWEGLVAQVRTNVEGRSFTRGPEEYLAMRRGSLGAYPALVNNEWAYGIDLPEDVADHPLVFEIMVIMSDQILLVNDILSYEKDLRLGVDHNMVRLLKAKGLSTQQAINEVGVMINNCYRRYYRALSELPCFGEEADRALLGYLEVEKNHALGSLLWSYKTGRYFKSKEDGARVRKTRELLIPKKMAAL</sequence>